<reference key="1">
    <citation type="journal article" date="2003" name="Proc. Natl. Acad. Sci. U.S.A.">
        <title>The complete genome sequence of the carcinogenic bacterium Helicobacter hepaticus.</title>
        <authorList>
            <person name="Suerbaum S."/>
            <person name="Josenhans C."/>
            <person name="Sterzenbach T."/>
            <person name="Drescher B."/>
            <person name="Brandt P."/>
            <person name="Bell M."/>
            <person name="Droege M."/>
            <person name="Fartmann B."/>
            <person name="Fischer H.-P."/>
            <person name="Ge Z."/>
            <person name="Hoerster A."/>
            <person name="Holland R."/>
            <person name="Klein K."/>
            <person name="Koenig J."/>
            <person name="Macko L."/>
            <person name="Mendz G.L."/>
            <person name="Nyakatura G."/>
            <person name="Schauer D.B."/>
            <person name="Shen Z."/>
            <person name="Weber J."/>
            <person name="Frosch M."/>
            <person name="Fox J.G."/>
        </authorList>
    </citation>
    <scope>NUCLEOTIDE SEQUENCE [LARGE SCALE GENOMIC DNA]</scope>
    <source>
        <strain>ATCC 51449 / 3B1</strain>
    </source>
</reference>
<organism>
    <name type="scientific">Helicobacter hepaticus (strain ATCC 51449 / 3B1)</name>
    <dbReference type="NCBI Taxonomy" id="235279"/>
    <lineage>
        <taxon>Bacteria</taxon>
        <taxon>Pseudomonadati</taxon>
        <taxon>Campylobacterota</taxon>
        <taxon>Epsilonproteobacteria</taxon>
        <taxon>Campylobacterales</taxon>
        <taxon>Helicobacteraceae</taxon>
        <taxon>Helicobacter</taxon>
    </lineage>
</organism>
<dbReference type="EC" id="2.3.1.191" evidence="1"/>
<dbReference type="EMBL" id="AE017125">
    <property type="protein sequence ID" value="AAP77696.1"/>
    <property type="molecule type" value="Genomic_DNA"/>
</dbReference>
<dbReference type="RefSeq" id="WP_011115939.1">
    <property type="nucleotide sequence ID" value="NC_004917.1"/>
</dbReference>
<dbReference type="SMR" id="Q7VH68"/>
<dbReference type="STRING" id="235279.HH_1099"/>
<dbReference type="KEGG" id="hhe:HH_1099"/>
<dbReference type="eggNOG" id="COG1044">
    <property type="taxonomic scope" value="Bacteria"/>
</dbReference>
<dbReference type="HOGENOM" id="CLU_049865_0_0_7"/>
<dbReference type="OrthoDB" id="9784739at2"/>
<dbReference type="UniPathway" id="UPA00973"/>
<dbReference type="Proteomes" id="UP000002495">
    <property type="component" value="Chromosome"/>
</dbReference>
<dbReference type="GO" id="GO:0016020">
    <property type="term" value="C:membrane"/>
    <property type="evidence" value="ECO:0007669"/>
    <property type="project" value="GOC"/>
</dbReference>
<dbReference type="GO" id="GO:0016410">
    <property type="term" value="F:N-acyltransferase activity"/>
    <property type="evidence" value="ECO:0007669"/>
    <property type="project" value="InterPro"/>
</dbReference>
<dbReference type="GO" id="GO:0009245">
    <property type="term" value="P:lipid A biosynthetic process"/>
    <property type="evidence" value="ECO:0007669"/>
    <property type="project" value="UniProtKB-UniRule"/>
</dbReference>
<dbReference type="CDD" id="cd03352">
    <property type="entry name" value="LbH_LpxD"/>
    <property type="match status" value="1"/>
</dbReference>
<dbReference type="Gene3D" id="2.160.10.10">
    <property type="entry name" value="Hexapeptide repeat proteins"/>
    <property type="match status" value="1"/>
</dbReference>
<dbReference type="Gene3D" id="3.40.1390.10">
    <property type="entry name" value="MurE/MurF, N-terminal domain"/>
    <property type="match status" value="1"/>
</dbReference>
<dbReference type="HAMAP" id="MF_00523">
    <property type="entry name" value="LpxD"/>
    <property type="match status" value="1"/>
</dbReference>
<dbReference type="InterPro" id="IPR001451">
    <property type="entry name" value="Hexapep"/>
</dbReference>
<dbReference type="InterPro" id="IPR007691">
    <property type="entry name" value="LpxD"/>
</dbReference>
<dbReference type="InterPro" id="IPR011004">
    <property type="entry name" value="Trimer_LpxA-like_sf"/>
</dbReference>
<dbReference type="InterPro" id="IPR020573">
    <property type="entry name" value="UDP_GlcNAc_AcTrfase_non-rep"/>
</dbReference>
<dbReference type="NCBIfam" id="TIGR01853">
    <property type="entry name" value="lipid_A_lpxD"/>
    <property type="match status" value="1"/>
</dbReference>
<dbReference type="NCBIfam" id="NF002060">
    <property type="entry name" value="PRK00892.1"/>
    <property type="match status" value="1"/>
</dbReference>
<dbReference type="PANTHER" id="PTHR43378">
    <property type="entry name" value="UDP-3-O-ACYLGLUCOSAMINE N-ACYLTRANSFERASE"/>
    <property type="match status" value="1"/>
</dbReference>
<dbReference type="PANTHER" id="PTHR43378:SF2">
    <property type="entry name" value="UDP-3-O-ACYLGLUCOSAMINE N-ACYLTRANSFERASE 1, MITOCHONDRIAL-RELATED"/>
    <property type="match status" value="1"/>
</dbReference>
<dbReference type="Pfam" id="PF00132">
    <property type="entry name" value="Hexapep"/>
    <property type="match status" value="2"/>
</dbReference>
<dbReference type="Pfam" id="PF04613">
    <property type="entry name" value="LpxD"/>
    <property type="match status" value="1"/>
</dbReference>
<dbReference type="SUPFAM" id="SSF51161">
    <property type="entry name" value="Trimeric LpxA-like enzymes"/>
    <property type="match status" value="1"/>
</dbReference>
<keyword id="KW-0012">Acyltransferase</keyword>
<keyword id="KW-0441">Lipid A biosynthesis</keyword>
<keyword id="KW-0444">Lipid biosynthesis</keyword>
<keyword id="KW-0443">Lipid metabolism</keyword>
<keyword id="KW-1185">Reference proteome</keyword>
<keyword id="KW-0677">Repeat</keyword>
<keyword id="KW-0808">Transferase</keyword>
<gene>
    <name evidence="1" type="primary">lpxD</name>
    <name type="ordered locus">HH_1099</name>
</gene>
<evidence type="ECO:0000255" key="1">
    <source>
        <dbReference type="HAMAP-Rule" id="MF_00523"/>
    </source>
</evidence>
<protein>
    <recommendedName>
        <fullName evidence="1">UDP-3-O-acylglucosamine N-acyltransferase</fullName>
        <ecNumber evidence="1">2.3.1.191</ecNumber>
    </recommendedName>
</protein>
<comment type="function">
    <text evidence="1">Catalyzes the N-acylation of UDP-3-O-acylglucosamine using 3-hydroxyacyl-ACP as the acyl donor. Is involved in the biosynthesis of lipid A, a phosphorylated glycolipid that anchors the lipopolysaccharide to the outer membrane of the cell.</text>
</comment>
<comment type="catalytic activity">
    <reaction evidence="1">
        <text>a UDP-3-O-[(3R)-3-hydroxyacyl]-alpha-D-glucosamine + a (3R)-hydroxyacyl-[ACP] = a UDP-2-N,3-O-bis[(3R)-3-hydroxyacyl]-alpha-D-glucosamine + holo-[ACP] + H(+)</text>
        <dbReference type="Rhea" id="RHEA:53836"/>
        <dbReference type="Rhea" id="RHEA-COMP:9685"/>
        <dbReference type="Rhea" id="RHEA-COMP:9945"/>
        <dbReference type="ChEBI" id="CHEBI:15378"/>
        <dbReference type="ChEBI" id="CHEBI:64479"/>
        <dbReference type="ChEBI" id="CHEBI:78827"/>
        <dbReference type="ChEBI" id="CHEBI:137740"/>
        <dbReference type="ChEBI" id="CHEBI:137748"/>
        <dbReference type="EC" id="2.3.1.191"/>
    </reaction>
</comment>
<comment type="pathway">
    <text evidence="1">Bacterial outer membrane biogenesis; LPS lipid A biosynthesis.</text>
</comment>
<comment type="subunit">
    <text evidence="1">Homotrimer.</text>
</comment>
<comment type="similarity">
    <text evidence="1">Belongs to the transferase hexapeptide repeat family. LpxD subfamily.</text>
</comment>
<proteinExistence type="inferred from homology"/>
<name>LPXD_HELHP</name>
<sequence>MLLSLAIDTAFKGYLSLQNTIENDFELNGIAPLESATPTQISYIDQDKYLSNLTDSQAGAVFIRPHLLDKVPSHIQPLVVENPHLAFALLSQLFAAPCFTLTTQNPRTNNIQIGANVVIGDNVSIGEHSIIMPNVVIGDNVSIGEHCKIYPNVVIYRDSIIGNRVNIHAGSIIGCDGFGYAHTAEGKHIKIEHNGRVVIEDDVEIGANNTIDRAVFGQTLIKQGAKIDNLVQIGHNCVVGEHTLLVSQVGLAGSTTTGRNVIMGGQAGTGGHIHIGDFVQVAGRGAVGKNLPPHTKWGGHPLMELNEWMKFYVSLRRLIKKDSKKL</sequence>
<feature type="chain" id="PRO_0000059678" description="UDP-3-O-acylglucosamine N-acyltransferase">
    <location>
        <begin position="1"/>
        <end position="326"/>
    </location>
</feature>
<feature type="active site" description="Proton acceptor" evidence="1">
    <location>
        <position position="235"/>
    </location>
</feature>
<accession>Q7VH68</accession>